<reference key="1">
    <citation type="journal article" date="2008" name="Foodborne Pathog. Dis.">
        <title>The complete genome sequence and analysis of the human pathogen Campylobacter lari.</title>
        <authorList>
            <person name="Miller W.G."/>
            <person name="Wang G."/>
            <person name="Binnewies T.T."/>
            <person name="Parker C.T."/>
        </authorList>
    </citation>
    <scope>NUCLEOTIDE SEQUENCE [LARGE SCALE GENOMIC DNA]</scope>
    <source>
        <strain>RM2100 / D67 / ATCC BAA-1060</strain>
    </source>
</reference>
<dbReference type="EMBL" id="CP000932">
    <property type="protein sequence ID" value="ACM63462.1"/>
    <property type="molecule type" value="Genomic_DNA"/>
</dbReference>
<dbReference type="RefSeq" id="WP_012660847.1">
    <property type="nucleotide sequence ID" value="NC_012039.1"/>
</dbReference>
<dbReference type="SMR" id="B9KEH7"/>
<dbReference type="STRING" id="306263.Cla_0096"/>
<dbReference type="GeneID" id="93004192"/>
<dbReference type="KEGG" id="cla:CLA_0096"/>
<dbReference type="eggNOG" id="COG0203">
    <property type="taxonomic scope" value="Bacteria"/>
</dbReference>
<dbReference type="HOGENOM" id="CLU_074407_2_0_7"/>
<dbReference type="Proteomes" id="UP000007727">
    <property type="component" value="Chromosome"/>
</dbReference>
<dbReference type="GO" id="GO:0022625">
    <property type="term" value="C:cytosolic large ribosomal subunit"/>
    <property type="evidence" value="ECO:0007669"/>
    <property type="project" value="TreeGrafter"/>
</dbReference>
<dbReference type="GO" id="GO:0003735">
    <property type="term" value="F:structural constituent of ribosome"/>
    <property type="evidence" value="ECO:0007669"/>
    <property type="project" value="InterPro"/>
</dbReference>
<dbReference type="GO" id="GO:0006412">
    <property type="term" value="P:translation"/>
    <property type="evidence" value="ECO:0007669"/>
    <property type="project" value="UniProtKB-UniRule"/>
</dbReference>
<dbReference type="FunFam" id="3.90.1030.10:FF:000003">
    <property type="entry name" value="50S ribosomal protein L17"/>
    <property type="match status" value="1"/>
</dbReference>
<dbReference type="Gene3D" id="3.90.1030.10">
    <property type="entry name" value="Ribosomal protein L17"/>
    <property type="match status" value="1"/>
</dbReference>
<dbReference type="HAMAP" id="MF_01368">
    <property type="entry name" value="Ribosomal_bL17"/>
    <property type="match status" value="1"/>
</dbReference>
<dbReference type="InterPro" id="IPR000456">
    <property type="entry name" value="Ribosomal_bL17"/>
</dbReference>
<dbReference type="InterPro" id="IPR047859">
    <property type="entry name" value="Ribosomal_bL17_CS"/>
</dbReference>
<dbReference type="InterPro" id="IPR036373">
    <property type="entry name" value="Ribosomal_bL17_sf"/>
</dbReference>
<dbReference type="NCBIfam" id="TIGR00059">
    <property type="entry name" value="L17"/>
    <property type="match status" value="1"/>
</dbReference>
<dbReference type="PANTHER" id="PTHR14413:SF16">
    <property type="entry name" value="LARGE RIBOSOMAL SUBUNIT PROTEIN BL17M"/>
    <property type="match status" value="1"/>
</dbReference>
<dbReference type="PANTHER" id="PTHR14413">
    <property type="entry name" value="RIBOSOMAL PROTEIN L17"/>
    <property type="match status" value="1"/>
</dbReference>
<dbReference type="Pfam" id="PF01196">
    <property type="entry name" value="Ribosomal_L17"/>
    <property type="match status" value="1"/>
</dbReference>
<dbReference type="SUPFAM" id="SSF64263">
    <property type="entry name" value="Prokaryotic ribosomal protein L17"/>
    <property type="match status" value="1"/>
</dbReference>
<dbReference type="PROSITE" id="PS01167">
    <property type="entry name" value="RIBOSOMAL_L17"/>
    <property type="match status" value="1"/>
</dbReference>
<name>RL17_CAMLR</name>
<organism>
    <name type="scientific">Campylobacter lari (strain RM2100 / D67 / ATCC BAA-1060)</name>
    <dbReference type="NCBI Taxonomy" id="306263"/>
    <lineage>
        <taxon>Bacteria</taxon>
        <taxon>Pseudomonadati</taxon>
        <taxon>Campylobacterota</taxon>
        <taxon>Epsilonproteobacteria</taxon>
        <taxon>Campylobacterales</taxon>
        <taxon>Campylobacteraceae</taxon>
        <taxon>Campylobacter</taxon>
    </lineage>
</organism>
<proteinExistence type="inferred from homology"/>
<gene>
    <name evidence="1" type="primary">rplQ</name>
    <name type="ordered locus">Cla_0096</name>
</gene>
<sequence length="117" mass="13275">MRHRHGYRKLGRTSTHRAALLKNLTIAIIKAGKIETTLPKAKELRGYVERLITRARKGDFNAHRAVFASLQDKEATNKLVTEIAPKFADRNGGYTRIIKTRIRRGDAAEMAFIEFVA</sequence>
<accession>B9KEH7</accession>
<keyword id="KW-1185">Reference proteome</keyword>
<keyword id="KW-0687">Ribonucleoprotein</keyword>
<keyword id="KW-0689">Ribosomal protein</keyword>
<protein>
    <recommendedName>
        <fullName evidence="1">Large ribosomal subunit protein bL17</fullName>
    </recommendedName>
    <alternativeName>
        <fullName evidence="2">50S ribosomal protein L17</fullName>
    </alternativeName>
</protein>
<evidence type="ECO:0000255" key="1">
    <source>
        <dbReference type="HAMAP-Rule" id="MF_01368"/>
    </source>
</evidence>
<evidence type="ECO:0000305" key="2"/>
<comment type="subunit">
    <text evidence="1">Part of the 50S ribosomal subunit. Contacts protein L32.</text>
</comment>
<comment type="similarity">
    <text evidence="1">Belongs to the bacterial ribosomal protein bL17 family.</text>
</comment>
<feature type="chain" id="PRO_1000184007" description="Large ribosomal subunit protein bL17">
    <location>
        <begin position="1"/>
        <end position="117"/>
    </location>
</feature>